<feature type="chain" id="PRO_0000161466" description="tRNA uridine(34) hydroxylase">
    <location>
        <begin position="1"/>
        <end position="312"/>
    </location>
</feature>
<feature type="domain" description="Rhodanese" evidence="1">
    <location>
        <begin position="130"/>
        <end position="225"/>
    </location>
</feature>
<feature type="active site" description="Cysteine persulfide intermediate" evidence="1">
    <location>
        <position position="185"/>
    </location>
</feature>
<protein>
    <recommendedName>
        <fullName evidence="1">tRNA uridine(34) hydroxylase</fullName>
        <ecNumber evidence="1">1.14.-.-</ecNumber>
    </recommendedName>
    <alternativeName>
        <fullName evidence="1">tRNA hydroxylation protein O</fullName>
    </alternativeName>
</protein>
<dbReference type="EC" id="1.14.-.-" evidence="1"/>
<dbReference type="EMBL" id="BX248360">
    <property type="protein sequence ID" value="CAE50824.1"/>
    <property type="molecule type" value="Genomic_DNA"/>
</dbReference>
<dbReference type="RefSeq" id="WP_010935740.1">
    <property type="nucleotide sequence ID" value="NC_002935.2"/>
</dbReference>
<dbReference type="SMR" id="Q6NEH3"/>
<dbReference type="STRING" id="257309.DIP2301"/>
<dbReference type="KEGG" id="cdi:DIP2301"/>
<dbReference type="HOGENOM" id="CLU_038878_1_0_11"/>
<dbReference type="Proteomes" id="UP000002198">
    <property type="component" value="Chromosome"/>
</dbReference>
<dbReference type="GO" id="GO:0016705">
    <property type="term" value="F:oxidoreductase activity, acting on paired donors, with incorporation or reduction of molecular oxygen"/>
    <property type="evidence" value="ECO:0007669"/>
    <property type="project" value="UniProtKB-UniRule"/>
</dbReference>
<dbReference type="GO" id="GO:0006400">
    <property type="term" value="P:tRNA modification"/>
    <property type="evidence" value="ECO:0007669"/>
    <property type="project" value="UniProtKB-UniRule"/>
</dbReference>
<dbReference type="CDD" id="cd01518">
    <property type="entry name" value="RHOD_YceA"/>
    <property type="match status" value="1"/>
</dbReference>
<dbReference type="Gene3D" id="3.30.70.100">
    <property type="match status" value="1"/>
</dbReference>
<dbReference type="Gene3D" id="3.40.250.10">
    <property type="entry name" value="Rhodanese-like domain"/>
    <property type="match status" value="1"/>
</dbReference>
<dbReference type="HAMAP" id="MF_00469">
    <property type="entry name" value="TrhO"/>
    <property type="match status" value="1"/>
</dbReference>
<dbReference type="InterPro" id="IPR001763">
    <property type="entry name" value="Rhodanese-like_dom"/>
</dbReference>
<dbReference type="InterPro" id="IPR036873">
    <property type="entry name" value="Rhodanese-like_dom_sf"/>
</dbReference>
<dbReference type="InterPro" id="IPR022111">
    <property type="entry name" value="Rhodanese_C"/>
</dbReference>
<dbReference type="InterPro" id="IPR020936">
    <property type="entry name" value="TrhO"/>
</dbReference>
<dbReference type="InterPro" id="IPR040503">
    <property type="entry name" value="TRHO_N"/>
</dbReference>
<dbReference type="NCBIfam" id="NF001134">
    <property type="entry name" value="PRK00142.1-2"/>
    <property type="match status" value="1"/>
</dbReference>
<dbReference type="PANTHER" id="PTHR43268">
    <property type="entry name" value="THIOSULFATE SULFURTRANSFERASE/RHODANESE-LIKE DOMAIN-CONTAINING PROTEIN 2"/>
    <property type="match status" value="1"/>
</dbReference>
<dbReference type="PANTHER" id="PTHR43268:SF6">
    <property type="entry name" value="THIOSULFATE SULFURTRANSFERASE_RHODANESE-LIKE DOMAIN-CONTAINING PROTEIN 2"/>
    <property type="match status" value="1"/>
</dbReference>
<dbReference type="Pfam" id="PF00581">
    <property type="entry name" value="Rhodanese"/>
    <property type="match status" value="1"/>
</dbReference>
<dbReference type="Pfam" id="PF12368">
    <property type="entry name" value="Rhodanese_C"/>
    <property type="match status" value="1"/>
</dbReference>
<dbReference type="Pfam" id="PF17773">
    <property type="entry name" value="UPF0176_N"/>
    <property type="match status" value="1"/>
</dbReference>
<dbReference type="SMART" id="SM00450">
    <property type="entry name" value="RHOD"/>
    <property type="match status" value="1"/>
</dbReference>
<dbReference type="SUPFAM" id="SSF52821">
    <property type="entry name" value="Rhodanese/Cell cycle control phosphatase"/>
    <property type="match status" value="1"/>
</dbReference>
<dbReference type="PROSITE" id="PS50206">
    <property type="entry name" value="RHODANESE_3"/>
    <property type="match status" value="1"/>
</dbReference>
<evidence type="ECO:0000255" key="1">
    <source>
        <dbReference type="HAMAP-Rule" id="MF_00469"/>
    </source>
</evidence>
<comment type="function">
    <text evidence="1">Catalyzes oxygen-dependent 5-hydroxyuridine (ho5U) modification at position 34 in tRNAs.</text>
</comment>
<comment type="catalytic activity">
    <reaction evidence="1">
        <text>uridine(34) in tRNA + AH2 + O2 = 5-hydroxyuridine(34) in tRNA + A + H2O</text>
        <dbReference type="Rhea" id="RHEA:64224"/>
        <dbReference type="Rhea" id="RHEA-COMP:11727"/>
        <dbReference type="Rhea" id="RHEA-COMP:13381"/>
        <dbReference type="ChEBI" id="CHEBI:13193"/>
        <dbReference type="ChEBI" id="CHEBI:15377"/>
        <dbReference type="ChEBI" id="CHEBI:15379"/>
        <dbReference type="ChEBI" id="CHEBI:17499"/>
        <dbReference type="ChEBI" id="CHEBI:65315"/>
        <dbReference type="ChEBI" id="CHEBI:136877"/>
    </reaction>
</comment>
<comment type="similarity">
    <text evidence="1">Belongs to the TrhO family.</text>
</comment>
<name>TRHO_CORDI</name>
<organism>
    <name type="scientific">Corynebacterium diphtheriae (strain ATCC 700971 / NCTC 13129 / Biotype gravis)</name>
    <dbReference type="NCBI Taxonomy" id="257309"/>
    <lineage>
        <taxon>Bacteria</taxon>
        <taxon>Bacillati</taxon>
        <taxon>Actinomycetota</taxon>
        <taxon>Actinomycetes</taxon>
        <taxon>Mycobacteriales</taxon>
        <taxon>Corynebacteriaceae</taxon>
        <taxon>Corynebacterium</taxon>
    </lineage>
</organism>
<proteinExistence type="inferred from homology"/>
<reference key="1">
    <citation type="journal article" date="2003" name="Nucleic Acids Res.">
        <title>The complete genome sequence and analysis of Corynebacterium diphtheriae NCTC13129.</title>
        <authorList>
            <person name="Cerdeno-Tarraga A.-M."/>
            <person name="Efstratiou A."/>
            <person name="Dover L.G."/>
            <person name="Holden M.T.G."/>
            <person name="Pallen M.J."/>
            <person name="Bentley S.D."/>
            <person name="Besra G.S."/>
            <person name="Churcher C.M."/>
            <person name="James K.D."/>
            <person name="De Zoysa A."/>
            <person name="Chillingworth T."/>
            <person name="Cronin A."/>
            <person name="Dowd L."/>
            <person name="Feltwell T."/>
            <person name="Hamlin N."/>
            <person name="Holroyd S."/>
            <person name="Jagels K."/>
            <person name="Moule S."/>
            <person name="Quail M.A."/>
            <person name="Rabbinowitsch E."/>
            <person name="Rutherford K.M."/>
            <person name="Thomson N.R."/>
            <person name="Unwin L."/>
            <person name="Whitehead S."/>
            <person name="Barrell B.G."/>
            <person name="Parkhill J."/>
        </authorList>
    </citation>
    <scope>NUCLEOTIDE SEQUENCE [LARGE SCALE GENOMIC DNA]</scope>
    <source>
        <strain>ATCC 700971 / NCTC 13129 / Biotype gravis</strain>
    </source>
</reference>
<accession>Q6NEH3</accession>
<gene>
    <name evidence="1" type="primary">trhO</name>
    <name type="ordered locus">DIP2301</name>
</gene>
<sequence length="312" mass="35006">MAQSKILLYYKFTPIADPKAMMLWQRDMCELLGLKGRILISEHGINGTVGGDMDACKRYVRKMREYPGFRGTEFKWSDGGAEDFPKLSVKVRDEIVAFGAPGELKVDEKGVIGGGVHLKPEEVNKLVEERGDDVVFFDGRNAMEAQIGKFKNAVVPDVRTTHDFIRELESGKYDWMKDKPVVSYCTGGIRCEILSSLMKNRGFKEIYQIDGGIVRYGEKYGNDGLWEGSLYVFDRRMHMEFGNGVQDPGFIQLGHCVQCGAPTNKFEHCINEDECRELVLMCPDCYENPATRNCGREHCKEVAAEAAAAAAV</sequence>
<keyword id="KW-0560">Oxidoreductase</keyword>
<keyword id="KW-1185">Reference proteome</keyword>
<keyword id="KW-0819">tRNA processing</keyword>